<comment type="function">
    <text evidence="2">Regulatory subunit of the PI3K complex that mediates formation of phosphatidylinositol 3-phosphate; different complex forms are believed to play a role in multiple membrane trafficking pathways: PI3KC3-C1 is involved in initiation of autophagosomes and PI3KC3-C2 in maturation of autophagosomes and endocytosis. Involved in regulation of degradative endocytic trafficking and cytokinesis, probably in the context of PI3KC3-C2 (By similarity).</text>
</comment>
<comment type="catalytic activity">
    <reaction>
        <text>L-seryl-[protein] + ATP = O-phospho-L-seryl-[protein] + ADP + H(+)</text>
        <dbReference type="Rhea" id="RHEA:17989"/>
        <dbReference type="Rhea" id="RHEA-COMP:9863"/>
        <dbReference type="Rhea" id="RHEA-COMP:11604"/>
        <dbReference type="ChEBI" id="CHEBI:15378"/>
        <dbReference type="ChEBI" id="CHEBI:29999"/>
        <dbReference type="ChEBI" id="CHEBI:30616"/>
        <dbReference type="ChEBI" id="CHEBI:83421"/>
        <dbReference type="ChEBI" id="CHEBI:456216"/>
        <dbReference type="EC" id="2.7.11.1"/>
    </reaction>
</comment>
<comment type="catalytic activity">
    <reaction>
        <text>L-threonyl-[protein] + ATP = O-phospho-L-threonyl-[protein] + ADP + H(+)</text>
        <dbReference type="Rhea" id="RHEA:46608"/>
        <dbReference type="Rhea" id="RHEA-COMP:11060"/>
        <dbReference type="Rhea" id="RHEA-COMP:11605"/>
        <dbReference type="ChEBI" id="CHEBI:15378"/>
        <dbReference type="ChEBI" id="CHEBI:30013"/>
        <dbReference type="ChEBI" id="CHEBI:30616"/>
        <dbReference type="ChEBI" id="CHEBI:61977"/>
        <dbReference type="ChEBI" id="CHEBI:456216"/>
        <dbReference type="EC" id="2.7.11.1"/>
    </reaction>
</comment>
<comment type="cofactor">
    <cofactor evidence="1">
        <name>Mn(2+)</name>
        <dbReference type="ChEBI" id="CHEBI:29035"/>
    </cofactor>
</comment>
<comment type="subunit">
    <text evidence="2 6 7 9">Component of the PI3K (PI3KC3/PI3K-III/class III phosphatidylinositol 3-kinase) complex the core of which is composed of the catalytic subunit PIK3C3, the regulatory subunit PIK3R4 and BECN1 associating with additional regulatory/auxiliary subunits to form alternative complex forms. Alternative complex forms containing a fourth regulatory subunit in a mutually exclusive manner are PI3K complex I (PI3KC3-C1) containing ATG14, and PI3K complex II (PI3KC3-C2) containing UVRAG (PubMed:23332761). PI3KC3-C1 displays a V-shaped architecture with PIK3R4 serving as a bridge between PIK3C3 and the ATG14:BECN1 subcomplex. Both, PI3KC3-C1 and PI3KC3-C2, can associate with further regulatory subunits, such as RUBCN, SH3GLB1/Bif-1, AMBRA1 and NRBF2 (By similarity). PI3KC3-C1 probably associates with PIK3CB (PubMed:21059846). Interacts with RAB7A in the presence of PIK3C3/VPS34 (By similarity). Interacts with NRBF2 (By similarity). Interacts with ARMC3 (PubMed:34428398).</text>
</comment>
<comment type="interaction">
    <interactant intactId="EBI-6678184">
        <id>Q8VD65</id>
    </interactant>
    <interactant intactId="EBI-298630">
        <id>P23242</id>
        <label>Gja1</label>
    </interactant>
    <organismsDiffer>false</organismsDiffer>
    <experiments>3</experiments>
</comment>
<comment type="subcellular location">
    <subcellularLocation>
        <location evidence="1">Late endosome</location>
    </subcellularLocation>
    <subcellularLocation>
        <location evidence="11">Cytoplasmic vesicle</location>
        <location evidence="11">Autophagosome</location>
    </subcellularLocation>
    <subcellularLocation>
        <location evidence="2">Membrane</location>
        <topology evidence="2">Lipid-anchor</topology>
    </subcellularLocation>
    <text evidence="8 11">As component of the PI3K complex I localized to pre-autophagosome structures. As component of the PI3K complex II localized predominantly to endosomes. Localizes also to discrete punctae along the ciliary axoneme (PubMed:24089209).</text>
</comment>
<comment type="PTM">
    <text evidence="1">Myristoylated.</text>
</comment>
<comment type="PTM">
    <text evidence="1">Probably autophosphorylated.</text>
</comment>
<comment type="similarity">
    <text evidence="3">Belongs to the protein kinase superfamily. Ser/Thr protein kinase family.</text>
</comment>
<evidence type="ECO:0000250" key="1"/>
<evidence type="ECO:0000250" key="2">
    <source>
        <dbReference type="UniProtKB" id="Q99570"/>
    </source>
</evidence>
<evidence type="ECO:0000255" key="3">
    <source>
        <dbReference type="PROSITE-ProRule" id="PRU00159"/>
    </source>
</evidence>
<evidence type="ECO:0000255" key="4">
    <source>
        <dbReference type="PROSITE-ProRule" id="PRU10027"/>
    </source>
</evidence>
<evidence type="ECO:0000256" key="5">
    <source>
        <dbReference type="SAM" id="MobiDB-lite"/>
    </source>
</evidence>
<evidence type="ECO:0000269" key="6">
    <source>
    </source>
</evidence>
<evidence type="ECO:0000269" key="7">
    <source>
    </source>
</evidence>
<evidence type="ECO:0000269" key="8">
    <source>
    </source>
</evidence>
<evidence type="ECO:0000269" key="9">
    <source>
    </source>
</evidence>
<evidence type="ECO:0000303" key="10">
    <source>
    </source>
</evidence>
<evidence type="ECO:0000305" key="11"/>
<keyword id="KW-0067">ATP-binding</keyword>
<keyword id="KW-0968">Cytoplasmic vesicle</keyword>
<keyword id="KW-0967">Endosome</keyword>
<keyword id="KW-0418">Kinase</keyword>
<keyword id="KW-0449">Lipoprotein</keyword>
<keyword id="KW-0472">Membrane</keyword>
<keyword id="KW-0519">Myristate</keyword>
<keyword id="KW-0547">Nucleotide-binding</keyword>
<keyword id="KW-0597">Phosphoprotein</keyword>
<keyword id="KW-1185">Reference proteome</keyword>
<keyword id="KW-0677">Repeat</keyword>
<keyword id="KW-0723">Serine/threonine-protein kinase</keyword>
<keyword id="KW-0808">Transferase</keyword>
<keyword id="KW-0853">WD repeat</keyword>
<feature type="initiator methionine" description="Removed" evidence="2">
    <location>
        <position position="1"/>
    </location>
</feature>
<feature type="chain" id="PRO_0000086525" description="Phosphoinositide 3-kinase regulatory subunit 4">
    <location>
        <begin position="2"/>
        <end position="1358"/>
    </location>
</feature>
<feature type="domain" description="Protein kinase" evidence="3">
    <location>
        <begin position="26"/>
        <end position="324"/>
    </location>
</feature>
<feature type="repeat" description="HEAT 1">
    <location>
        <begin position="413"/>
        <end position="450"/>
    </location>
</feature>
<feature type="repeat" description="HEAT 2">
    <location>
        <begin position="458"/>
        <end position="495"/>
    </location>
</feature>
<feature type="repeat" description="HEAT 3">
    <location>
        <begin position="572"/>
        <end position="610"/>
    </location>
</feature>
<feature type="repeat" description="HEAT 4">
    <location>
        <begin position="612"/>
        <end position="648"/>
    </location>
</feature>
<feature type="repeat" description="WD 1">
    <location>
        <begin position="991"/>
        <end position="1030"/>
    </location>
</feature>
<feature type="repeat" description="WD 2">
    <location>
        <begin position="1040"/>
        <end position="1079"/>
    </location>
</feature>
<feature type="repeat" description="WD 3">
    <location>
        <begin position="1093"/>
        <end position="1134"/>
    </location>
</feature>
<feature type="repeat" description="WD 4">
    <location>
        <begin position="1139"/>
        <end position="1178"/>
    </location>
</feature>
<feature type="repeat" description="WD 5">
    <location>
        <begin position="1182"/>
        <end position="1223"/>
    </location>
</feature>
<feature type="repeat" description="WD 6">
    <location>
        <begin position="1237"/>
        <end position="1278"/>
    </location>
</feature>
<feature type="repeat" description="WD 7">
    <location>
        <begin position="1327"/>
        <end position="1358"/>
    </location>
</feature>
<feature type="region of interest" description="Disordered" evidence="5">
    <location>
        <begin position="1307"/>
        <end position="1326"/>
    </location>
</feature>
<feature type="compositionally biased region" description="Basic and acidic residues" evidence="5">
    <location>
        <begin position="1315"/>
        <end position="1326"/>
    </location>
</feature>
<feature type="active site" description="Proton acceptor" evidence="3 4">
    <location>
        <position position="148"/>
    </location>
</feature>
<feature type="binding site" evidence="3">
    <location>
        <begin position="32"/>
        <end position="40"/>
    </location>
    <ligand>
        <name>ATP</name>
        <dbReference type="ChEBI" id="CHEBI:30616"/>
    </ligand>
</feature>
<feature type="binding site" evidence="3">
    <location>
        <position position="53"/>
    </location>
    <ligand>
        <name>ATP</name>
        <dbReference type="ChEBI" id="CHEBI:30616"/>
    </ligand>
</feature>
<feature type="modified residue" description="Phosphoserine" evidence="2">
    <location>
        <position position="808"/>
    </location>
</feature>
<feature type="modified residue" description="Phosphoserine" evidence="2">
    <location>
        <position position="813"/>
    </location>
</feature>
<feature type="modified residue" description="Phosphoserine" evidence="2">
    <location>
        <position position="853"/>
    </location>
</feature>
<feature type="modified residue" description="Phosphoserine" evidence="2">
    <location>
        <position position="865"/>
    </location>
</feature>
<feature type="modified residue" description="Phosphothreonine" evidence="2">
    <location>
        <position position="1316"/>
    </location>
</feature>
<feature type="lipid moiety-binding region" description="N-myristoyl glycine" evidence="2">
    <location>
        <position position="2"/>
    </location>
</feature>
<feature type="sequence conflict" description="In Ref. 2; BAC31236." evidence="11" ref="2">
    <original>QMINREPEKRLEAE</original>
    <variation>MLQIRAIEFYLTMS</variation>
    <location>
        <begin position="292"/>
        <end position="305"/>
    </location>
</feature>
<feature type="sequence conflict" description="In Ref. 2; BAC31417." evidence="11" ref="2">
    <original>P</original>
    <variation>S</variation>
    <location>
        <position position="511"/>
    </location>
</feature>
<feature type="sequence conflict" description="In Ref. 2; BAC31417." evidence="11" ref="2">
    <original>ELQALHEMVQQKVVTLLSDPENIVKQTLMESGITRLCVFFGRQKANDVLLSHMITFLNDKNDWHLRGAFFDSIVG</original>
    <variation>GCVTPLLKSPSFTPNRYWYLVKAVICDSLGK</variation>
    <location>
        <begin position="529"/>
        <end position="603"/>
    </location>
</feature>
<feature type="sequence conflict" description="In Ref. 2; BAC31417." evidence="11" ref="2">
    <original>ELQALHEMVQQKVVTLLSDPENIVKQTLMES</original>
    <variation>GCVTPLLKSPSFTPNRYWYLVKAVICDSLG</variation>
    <location>
        <begin position="529"/>
        <end position="559"/>
    </location>
</feature>
<feature type="sequence conflict" description="In Ref. 3; AAH92149." evidence="11" ref="3">
    <original>QQGLSDAEEFVIVKALN</original>
    <variation>HAPPVPVLGNRSCSGQQ</variation>
    <location>
        <begin position="621"/>
        <end position="637"/>
    </location>
</feature>
<organism>
    <name type="scientific">Mus musculus</name>
    <name type="common">Mouse</name>
    <dbReference type="NCBI Taxonomy" id="10090"/>
    <lineage>
        <taxon>Eukaryota</taxon>
        <taxon>Metazoa</taxon>
        <taxon>Chordata</taxon>
        <taxon>Craniata</taxon>
        <taxon>Vertebrata</taxon>
        <taxon>Euteleostomi</taxon>
        <taxon>Mammalia</taxon>
        <taxon>Eutheria</taxon>
        <taxon>Euarchontoglires</taxon>
        <taxon>Glires</taxon>
        <taxon>Rodentia</taxon>
        <taxon>Myomorpha</taxon>
        <taxon>Muroidea</taxon>
        <taxon>Muridae</taxon>
        <taxon>Murinae</taxon>
        <taxon>Mus</taxon>
        <taxon>Mus</taxon>
    </lineage>
</organism>
<sequence>MGNQLAGIAPSQILSVESYFSDIHDFEYDKSLGSTRFFKVARAKHREGLVVVKVFAIQDPTLPLTSYKQELEELKIRLHSAQNCLPFQKAAEKASEKAAMLFRQYVRDNLYDRISTRPFLNNIEKRWIAFQILTAVDQAHKSGVRHGDIKTENVMVTSWNWVLLTDFASFKPTYLPEDNPADFNYFFDTSRRRTCYIAPERFVDGGMFATELEYMRDPSTPLVDLNSNQRARGELKRAMDIFSAGCVIAELFTEGVPLFDLSQLLAYRNGHFFPEQVLNKIEDRSIRDLVTQMINREPEKRLEAEDYLKQQRGNAFPEIFYTFLQPYMAQFAKETFLSADERILVIRKDLGNIIHNLCGHDLPEKAEGESRASGLVVLVSVITSCLQTLKSCDSKLAALELILHLAPRLSVEILLDRITPYLLHFSNDSVPRVRAEALRTLTKVLALVQEVPRNDVNIYPEYILPGIAHLAQDDATIVRLAYAENIALLAETALRFLELVQLKTLNMENEPDNEEVDEATRPNGDYDTELQALHEMVQQKVVTLLSDPENIVKQTLMESGITRLCVFFGRQKANDVLLSHMITFLNDKNDWHLRGAFFDSIVGVAAYVGWQSSSILKPLLQQGLSDAEEFVIVKALNALTCMCQLGLLQKPHVYEFASDIAPFLCHPNLWIRYGAVGFITVVAHQISTADVYCKLMPYLDPYITQPVIQIERKLVLLSVLKEPVSRSIFDYALRSKDIASLFRHLHMRQKKRNGSLLDCPPPEDPTIAQLLKKLLSQGMTEEEEDKLLALKDFMMKSNRAKANAVDQSHLHDSSQKGVIDLAALGITGRQVDLVKTKQEPDEKRARKHVKQDSNVNEEWKSMFGSLEPPNIPQALPKTSDHEVVQPGKPPRSESSAGICVPLSTSPQVSEAAHIPSKKPVIPVVSSTVLPSTYQIRITTCKTELQQLIQQKREQCNAERIAKQMMENAEWESKPPPPGWRPKGLLVAHLHEHKSAVNRIRVSDEHLLFATCSNDGTVKIWNSQKMEGKTTTTRSILTYSRIGGRVKTLTFCQGSHYLAIASDNGAVQLLGIEASKLPKSPKIHPLQSRILDQKEDGCVVDMHHFNSGAQSVLAYATVNGSLVGWDLRSSSNAWTLKHDLKSGLITSFAVDIHQCWLCIGTSSGAMACWDMRFQLPISSHCHPSRARIRRLSMHPLYQSWVIAAVQGNNEVSMWDMETGDRRLTLWASSAPPLSELQPSPHSVHGIYCSPADGNPILLTAGSDMKIRFWDLVSPERSYVVAGSTGSPSVSYYKKIIEGTEVVQEIQNKQKVGPSDDTPRRGPESLPVGHHDIITDIATFQTTQGFIVTASRDGIVKVWK</sequence>
<name>PI3R4_MOUSE</name>
<gene>
    <name type="primary">Pik3r4</name>
    <name evidence="10" type="synonym">Vps15</name>
</gene>
<dbReference type="EC" id="2.7.11.1"/>
<dbReference type="EMBL" id="AC157514">
    <property type="status" value="NOT_ANNOTATED_CDS"/>
    <property type="molecule type" value="Genomic_DNA"/>
</dbReference>
<dbReference type="EMBL" id="AK008703">
    <property type="protein sequence ID" value="BAB25843.1"/>
    <property type="molecule type" value="mRNA"/>
</dbReference>
<dbReference type="EMBL" id="AK042361">
    <property type="protein sequence ID" value="BAC31236.1"/>
    <property type="molecule type" value="mRNA"/>
</dbReference>
<dbReference type="EMBL" id="AK042953">
    <property type="protein sequence ID" value="BAC31417.1"/>
    <property type="molecule type" value="mRNA"/>
</dbReference>
<dbReference type="EMBL" id="AK087938">
    <property type="status" value="NOT_ANNOTATED_CDS"/>
    <property type="molecule type" value="mRNA"/>
</dbReference>
<dbReference type="EMBL" id="BC017537">
    <property type="protein sequence ID" value="AAH17537.1"/>
    <property type="molecule type" value="mRNA"/>
</dbReference>
<dbReference type="EMBL" id="BC092149">
    <property type="protein sequence ID" value="AAH92149.1"/>
    <property type="molecule type" value="mRNA"/>
</dbReference>
<dbReference type="CCDS" id="CCDS40753.1"/>
<dbReference type="RefSeq" id="NP_001074778.1">
    <property type="nucleotide sequence ID" value="NM_001081309.1"/>
</dbReference>
<dbReference type="SMR" id="Q8VD65"/>
<dbReference type="BioGRID" id="217660">
    <property type="interactions" value="16"/>
</dbReference>
<dbReference type="ComplexPortal" id="CPX-75">
    <property type="entry name" value="Phosphatidylinositol 3-kinase complex, class III, ATG14 variant"/>
</dbReference>
<dbReference type="ComplexPortal" id="CPX-76">
    <property type="entry name" value="Phosphatidylinositol 3-kinase complex, class III, UVRAG variant"/>
</dbReference>
<dbReference type="CORUM" id="Q8VD65"/>
<dbReference type="DIP" id="DIP-57219N"/>
<dbReference type="FunCoup" id="Q8VD65">
    <property type="interactions" value="3212"/>
</dbReference>
<dbReference type="IntAct" id="Q8VD65">
    <property type="interactions" value="7"/>
</dbReference>
<dbReference type="MINT" id="Q8VD65"/>
<dbReference type="STRING" id="10090.ENSMUSP00000139427"/>
<dbReference type="GlyGen" id="Q8VD65">
    <property type="glycosylation" value="4 sites, 1 N-linked glycan (1 site), 1 O-linked glycan (3 sites)"/>
</dbReference>
<dbReference type="iPTMnet" id="Q8VD65"/>
<dbReference type="PhosphoSitePlus" id="Q8VD65"/>
<dbReference type="SwissPalm" id="Q8VD65"/>
<dbReference type="jPOST" id="Q8VD65"/>
<dbReference type="PaxDb" id="10090-ENSMUSP00000067400"/>
<dbReference type="ProteomicsDB" id="289416"/>
<dbReference type="Pumba" id="Q8VD65"/>
<dbReference type="Antibodypedia" id="33331">
    <property type="antibodies" value="477 antibodies from 34 providers"/>
</dbReference>
<dbReference type="DNASU" id="75669"/>
<dbReference type="Ensembl" id="ENSMUST00000065778.13">
    <property type="protein sequence ID" value="ENSMUSP00000067400.7"/>
    <property type="gene ID" value="ENSMUSG00000032571.15"/>
</dbReference>
<dbReference type="Ensembl" id="ENSMUST00000191268.7">
    <property type="protein sequence ID" value="ENSMUSP00000139427.2"/>
    <property type="gene ID" value="ENSMUSG00000032571.15"/>
</dbReference>
<dbReference type="GeneID" id="75669"/>
<dbReference type="KEGG" id="mmu:75669"/>
<dbReference type="UCSC" id="uc009rio.1">
    <property type="organism name" value="mouse"/>
</dbReference>
<dbReference type="AGR" id="MGI:1922919"/>
<dbReference type="CTD" id="30849"/>
<dbReference type="MGI" id="MGI:1922919">
    <property type="gene designation" value="Pik3r4"/>
</dbReference>
<dbReference type="VEuPathDB" id="HostDB:ENSMUSG00000032571"/>
<dbReference type="eggNOG" id="KOG1240">
    <property type="taxonomic scope" value="Eukaryota"/>
</dbReference>
<dbReference type="GeneTree" id="ENSGT00390000016225"/>
<dbReference type="HOGENOM" id="CLU_001696_0_0_1"/>
<dbReference type="InParanoid" id="Q8VD65"/>
<dbReference type="OMA" id="ATNTCRI"/>
<dbReference type="OrthoDB" id="242910at2759"/>
<dbReference type="PhylomeDB" id="Q8VD65"/>
<dbReference type="TreeFam" id="TF102034"/>
<dbReference type="Reactome" id="R-MMU-109704">
    <property type="pathway name" value="PI3K Cascade"/>
</dbReference>
<dbReference type="Reactome" id="R-MMU-1632852">
    <property type="pathway name" value="Macroautophagy"/>
</dbReference>
<dbReference type="Reactome" id="R-MMU-1660514">
    <property type="pathway name" value="Synthesis of PIPs at the Golgi membrane"/>
</dbReference>
<dbReference type="Reactome" id="R-MMU-1660516">
    <property type="pathway name" value="Synthesis of PIPs at the early endosome membrane"/>
</dbReference>
<dbReference type="Reactome" id="R-MMU-1660517">
    <property type="pathway name" value="Synthesis of PIPs at the late endosome membrane"/>
</dbReference>
<dbReference type="Reactome" id="R-MMU-168138">
    <property type="pathway name" value="Toll Like Receptor 9 (TLR9) Cascade"/>
</dbReference>
<dbReference type="Reactome" id="R-MMU-5668599">
    <property type="pathway name" value="RHO GTPases Activate NADPH Oxidases"/>
</dbReference>
<dbReference type="BioGRID-ORCS" id="75669">
    <property type="hits" value="25 hits in 79 CRISPR screens"/>
</dbReference>
<dbReference type="ChiTaRS" id="Pik3r4">
    <property type="organism name" value="mouse"/>
</dbReference>
<dbReference type="PRO" id="PR:Q8VD65"/>
<dbReference type="Proteomes" id="UP000000589">
    <property type="component" value="Chromosome 9"/>
</dbReference>
<dbReference type="RNAct" id="Q8VD65">
    <property type="molecule type" value="protein"/>
</dbReference>
<dbReference type="Bgee" id="ENSMUSG00000032571">
    <property type="expression patterns" value="Expressed in primary oocyte and 251 other cell types or tissues"/>
</dbReference>
<dbReference type="ExpressionAtlas" id="Q8VD65">
    <property type="expression patterns" value="baseline and differential"/>
</dbReference>
<dbReference type="GO" id="GO:0005776">
    <property type="term" value="C:autophagosome"/>
    <property type="evidence" value="ECO:0007669"/>
    <property type="project" value="UniProtKB-SubCell"/>
</dbReference>
<dbReference type="GO" id="GO:0005930">
    <property type="term" value="C:axoneme"/>
    <property type="evidence" value="ECO:0000314"/>
    <property type="project" value="UniProtKB"/>
</dbReference>
<dbReference type="GO" id="GO:0036064">
    <property type="term" value="C:ciliary basal body"/>
    <property type="evidence" value="ECO:0007669"/>
    <property type="project" value="Ensembl"/>
</dbReference>
<dbReference type="GO" id="GO:0045171">
    <property type="term" value="C:intercellular bridge"/>
    <property type="evidence" value="ECO:0007669"/>
    <property type="project" value="Ensembl"/>
</dbReference>
<dbReference type="GO" id="GO:0005770">
    <property type="term" value="C:late endosome"/>
    <property type="evidence" value="ECO:0000250"/>
    <property type="project" value="UniProtKB"/>
</dbReference>
<dbReference type="GO" id="GO:0035032">
    <property type="term" value="C:phosphatidylinositol 3-kinase complex, class III"/>
    <property type="evidence" value="ECO:0000314"/>
    <property type="project" value="UniProtKB"/>
</dbReference>
<dbReference type="GO" id="GO:0005524">
    <property type="term" value="F:ATP binding"/>
    <property type="evidence" value="ECO:0007669"/>
    <property type="project" value="UniProtKB-KW"/>
</dbReference>
<dbReference type="GO" id="GO:0106310">
    <property type="term" value="F:protein serine kinase activity"/>
    <property type="evidence" value="ECO:0007669"/>
    <property type="project" value="RHEA"/>
</dbReference>
<dbReference type="GO" id="GO:0004674">
    <property type="term" value="F:protein serine/threonine kinase activity"/>
    <property type="evidence" value="ECO:0007669"/>
    <property type="project" value="UniProtKB-KW"/>
</dbReference>
<dbReference type="GO" id="GO:0097352">
    <property type="term" value="P:autophagosome maturation"/>
    <property type="evidence" value="ECO:0000266"/>
    <property type="project" value="ComplexPortal"/>
</dbReference>
<dbReference type="GO" id="GO:0042149">
    <property type="term" value="P:cellular response to glucose starvation"/>
    <property type="evidence" value="ECO:0000314"/>
    <property type="project" value="UniProtKB"/>
</dbReference>
<dbReference type="GO" id="GO:0045022">
    <property type="term" value="P:early endosome to late endosome transport"/>
    <property type="evidence" value="ECO:0000266"/>
    <property type="project" value="ComplexPortal"/>
</dbReference>
<dbReference type="GO" id="GO:0045324">
    <property type="term" value="P:late endosome to vacuole transport"/>
    <property type="evidence" value="ECO:0007669"/>
    <property type="project" value="InterPro"/>
</dbReference>
<dbReference type="GO" id="GO:0043491">
    <property type="term" value="P:phosphatidylinositol 3-kinase/protein kinase B signal transduction"/>
    <property type="evidence" value="ECO:0007669"/>
    <property type="project" value="Ensembl"/>
</dbReference>
<dbReference type="GO" id="GO:0036092">
    <property type="term" value="P:phosphatidylinositol-3-phosphate biosynthetic process"/>
    <property type="evidence" value="ECO:0000266"/>
    <property type="project" value="ComplexPortal"/>
</dbReference>
<dbReference type="GO" id="GO:0006622">
    <property type="term" value="P:protein targeting to lysosome"/>
    <property type="evidence" value="ECO:0000303"/>
    <property type="project" value="ComplexPortal"/>
</dbReference>
<dbReference type="GO" id="GO:0032801">
    <property type="term" value="P:receptor catabolic process"/>
    <property type="evidence" value="ECO:0007669"/>
    <property type="project" value="Ensembl"/>
</dbReference>
<dbReference type="GO" id="GO:0010506">
    <property type="term" value="P:regulation of autophagy"/>
    <property type="evidence" value="ECO:0000266"/>
    <property type="project" value="ComplexPortal"/>
</dbReference>
<dbReference type="GO" id="GO:0032465">
    <property type="term" value="P:regulation of cytokinesis"/>
    <property type="evidence" value="ECO:0007669"/>
    <property type="project" value="Ensembl"/>
</dbReference>
<dbReference type="GO" id="GO:0016241">
    <property type="term" value="P:regulation of macroautophagy"/>
    <property type="evidence" value="ECO:0000266"/>
    <property type="project" value="ComplexPortal"/>
</dbReference>
<dbReference type="CDD" id="cd13980">
    <property type="entry name" value="STKc_Vps15"/>
    <property type="match status" value="1"/>
</dbReference>
<dbReference type="FunFam" id="1.25.10.10:FF:000154">
    <property type="entry name" value="Phosphoinositide 3-kinase regulatory subunit 4"/>
    <property type="match status" value="1"/>
</dbReference>
<dbReference type="FunFam" id="1.10.510.10:FF:000305">
    <property type="entry name" value="phosphoinositide 3-kinase regulatory subunit 4"/>
    <property type="match status" value="1"/>
</dbReference>
<dbReference type="FunFam" id="1.25.10.10:FF:000100">
    <property type="entry name" value="phosphoinositide 3-kinase regulatory subunit 4"/>
    <property type="match status" value="1"/>
</dbReference>
<dbReference type="FunFam" id="2.130.10.10:FF:000396">
    <property type="entry name" value="phosphoinositide 3-kinase regulatory subunit 4"/>
    <property type="match status" value="1"/>
</dbReference>
<dbReference type="FunFam" id="2.130.10.10:FF:001215">
    <property type="entry name" value="phosphoinositide 3-kinase regulatory subunit 4"/>
    <property type="match status" value="1"/>
</dbReference>
<dbReference type="Gene3D" id="1.25.10.10">
    <property type="entry name" value="Leucine-rich Repeat Variant"/>
    <property type="match status" value="2"/>
</dbReference>
<dbReference type="Gene3D" id="1.10.510.10">
    <property type="entry name" value="Transferase(Phosphotransferase) domain 1"/>
    <property type="match status" value="1"/>
</dbReference>
<dbReference type="Gene3D" id="2.130.10.10">
    <property type="entry name" value="YVTN repeat-like/Quinoprotein amine dehydrogenase"/>
    <property type="match status" value="2"/>
</dbReference>
<dbReference type="InterPro" id="IPR011989">
    <property type="entry name" value="ARM-like"/>
</dbReference>
<dbReference type="InterPro" id="IPR016024">
    <property type="entry name" value="ARM-type_fold"/>
</dbReference>
<dbReference type="InterPro" id="IPR021133">
    <property type="entry name" value="HEAT_type_2"/>
</dbReference>
<dbReference type="InterPro" id="IPR011009">
    <property type="entry name" value="Kinase-like_dom_sf"/>
</dbReference>
<dbReference type="InterPro" id="IPR000719">
    <property type="entry name" value="Prot_kinase_dom"/>
</dbReference>
<dbReference type="InterPro" id="IPR008271">
    <property type="entry name" value="Ser/Thr_kinase_AS"/>
</dbReference>
<dbReference type="InterPro" id="IPR045162">
    <property type="entry name" value="Vps15-like"/>
</dbReference>
<dbReference type="InterPro" id="IPR055231">
    <property type="entry name" value="VPS15-like_hel"/>
</dbReference>
<dbReference type="InterPro" id="IPR015943">
    <property type="entry name" value="WD40/YVTN_repeat-like_dom_sf"/>
</dbReference>
<dbReference type="InterPro" id="IPR036322">
    <property type="entry name" value="WD40_repeat_dom_sf"/>
</dbReference>
<dbReference type="InterPro" id="IPR001680">
    <property type="entry name" value="WD40_rpt"/>
</dbReference>
<dbReference type="PANTHER" id="PTHR17583">
    <property type="entry name" value="PHOSPHOINOSITIDE 3-KINASE REGULATORY SUBUNIT 4"/>
    <property type="match status" value="1"/>
</dbReference>
<dbReference type="PANTHER" id="PTHR17583:SF0">
    <property type="entry name" value="PHOSPHOINOSITIDE 3-KINASE REGULATORY SUBUNIT 4"/>
    <property type="match status" value="1"/>
</dbReference>
<dbReference type="Pfam" id="PF00069">
    <property type="entry name" value="Pkinase"/>
    <property type="match status" value="1"/>
</dbReference>
<dbReference type="Pfam" id="PF22956">
    <property type="entry name" value="VPS15-like_hel"/>
    <property type="match status" value="1"/>
</dbReference>
<dbReference type="Pfam" id="PF00400">
    <property type="entry name" value="WD40"/>
    <property type="match status" value="2"/>
</dbReference>
<dbReference type="SMART" id="SM00220">
    <property type="entry name" value="S_TKc"/>
    <property type="match status" value="1"/>
</dbReference>
<dbReference type="SMART" id="SM00320">
    <property type="entry name" value="WD40"/>
    <property type="match status" value="6"/>
</dbReference>
<dbReference type="SUPFAM" id="SSF48371">
    <property type="entry name" value="ARM repeat"/>
    <property type="match status" value="1"/>
</dbReference>
<dbReference type="SUPFAM" id="SSF56112">
    <property type="entry name" value="Protein kinase-like (PK-like)"/>
    <property type="match status" value="1"/>
</dbReference>
<dbReference type="SUPFAM" id="SSF50978">
    <property type="entry name" value="WD40 repeat-like"/>
    <property type="match status" value="1"/>
</dbReference>
<dbReference type="PROSITE" id="PS50077">
    <property type="entry name" value="HEAT_REPEAT"/>
    <property type="match status" value="1"/>
</dbReference>
<dbReference type="PROSITE" id="PS50011">
    <property type="entry name" value="PROTEIN_KINASE_DOM"/>
    <property type="match status" value="1"/>
</dbReference>
<dbReference type="PROSITE" id="PS00108">
    <property type="entry name" value="PROTEIN_KINASE_ST"/>
    <property type="match status" value="1"/>
</dbReference>
<dbReference type="PROSITE" id="PS00678">
    <property type="entry name" value="WD_REPEATS_1"/>
    <property type="match status" value="2"/>
</dbReference>
<dbReference type="PROSITE" id="PS50082">
    <property type="entry name" value="WD_REPEATS_2"/>
    <property type="match status" value="3"/>
</dbReference>
<dbReference type="PROSITE" id="PS50294">
    <property type="entry name" value="WD_REPEATS_REGION"/>
    <property type="match status" value="2"/>
</dbReference>
<proteinExistence type="evidence at protein level"/>
<protein>
    <recommendedName>
        <fullName>Phosphoinositide 3-kinase regulatory subunit 4</fullName>
        <shortName>PI3-kinase regulatory subunit 4</shortName>
        <ecNumber>2.7.11.1</ecNumber>
    </recommendedName>
</protein>
<reference key="1">
    <citation type="journal article" date="2009" name="PLoS Biol.">
        <title>Lineage-specific biology revealed by a finished genome assembly of the mouse.</title>
        <authorList>
            <person name="Church D.M."/>
            <person name="Goodstadt L."/>
            <person name="Hillier L.W."/>
            <person name="Zody M.C."/>
            <person name="Goldstein S."/>
            <person name="She X."/>
            <person name="Bult C.J."/>
            <person name="Agarwala R."/>
            <person name="Cherry J.L."/>
            <person name="DiCuccio M."/>
            <person name="Hlavina W."/>
            <person name="Kapustin Y."/>
            <person name="Meric P."/>
            <person name="Maglott D."/>
            <person name="Birtle Z."/>
            <person name="Marques A.C."/>
            <person name="Graves T."/>
            <person name="Zhou S."/>
            <person name="Teague B."/>
            <person name="Potamousis K."/>
            <person name="Churas C."/>
            <person name="Place M."/>
            <person name="Herschleb J."/>
            <person name="Runnheim R."/>
            <person name="Forrest D."/>
            <person name="Amos-Landgraf J."/>
            <person name="Schwartz D.C."/>
            <person name="Cheng Z."/>
            <person name="Lindblad-Toh K."/>
            <person name="Eichler E.E."/>
            <person name="Ponting C.P."/>
        </authorList>
    </citation>
    <scope>NUCLEOTIDE SEQUENCE [LARGE SCALE GENOMIC DNA]</scope>
    <source>
        <strain>C57BL/6J</strain>
    </source>
</reference>
<reference key="2">
    <citation type="journal article" date="2005" name="Science">
        <title>The transcriptional landscape of the mammalian genome.</title>
        <authorList>
            <person name="Carninci P."/>
            <person name="Kasukawa T."/>
            <person name="Katayama S."/>
            <person name="Gough J."/>
            <person name="Frith M.C."/>
            <person name="Maeda N."/>
            <person name="Oyama R."/>
            <person name="Ravasi T."/>
            <person name="Lenhard B."/>
            <person name="Wells C."/>
            <person name="Kodzius R."/>
            <person name="Shimokawa K."/>
            <person name="Bajic V.B."/>
            <person name="Brenner S.E."/>
            <person name="Batalov S."/>
            <person name="Forrest A.R."/>
            <person name="Zavolan M."/>
            <person name="Davis M.J."/>
            <person name="Wilming L.G."/>
            <person name="Aidinis V."/>
            <person name="Allen J.E."/>
            <person name="Ambesi-Impiombato A."/>
            <person name="Apweiler R."/>
            <person name="Aturaliya R.N."/>
            <person name="Bailey T.L."/>
            <person name="Bansal M."/>
            <person name="Baxter L."/>
            <person name="Beisel K.W."/>
            <person name="Bersano T."/>
            <person name="Bono H."/>
            <person name="Chalk A.M."/>
            <person name="Chiu K.P."/>
            <person name="Choudhary V."/>
            <person name="Christoffels A."/>
            <person name="Clutterbuck D.R."/>
            <person name="Crowe M.L."/>
            <person name="Dalla E."/>
            <person name="Dalrymple B.P."/>
            <person name="de Bono B."/>
            <person name="Della Gatta G."/>
            <person name="di Bernardo D."/>
            <person name="Down T."/>
            <person name="Engstrom P."/>
            <person name="Fagiolini M."/>
            <person name="Faulkner G."/>
            <person name="Fletcher C.F."/>
            <person name="Fukushima T."/>
            <person name="Furuno M."/>
            <person name="Futaki S."/>
            <person name="Gariboldi M."/>
            <person name="Georgii-Hemming P."/>
            <person name="Gingeras T.R."/>
            <person name="Gojobori T."/>
            <person name="Green R.E."/>
            <person name="Gustincich S."/>
            <person name="Harbers M."/>
            <person name="Hayashi Y."/>
            <person name="Hensch T.K."/>
            <person name="Hirokawa N."/>
            <person name="Hill D."/>
            <person name="Huminiecki L."/>
            <person name="Iacono M."/>
            <person name="Ikeo K."/>
            <person name="Iwama A."/>
            <person name="Ishikawa T."/>
            <person name="Jakt M."/>
            <person name="Kanapin A."/>
            <person name="Katoh M."/>
            <person name="Kawasawa Y."/>
            <person name="Kelso J."/>
            <person name="Kitamura H."/>
            <person name="Kitano H."/>
            <person name="Kollias G."/>
            <person name="Krishnan S.P."/>
            <person name="Kruger A."/>
            <person name="Kummerfeld S.K."/>
            <person name="Kurochkin I.V."/>
            <person name="Lareau L.F."/>
            <person name="Lazarevic D."/>
            <person name="Lipovich L."/>
            <person name="Liu J."/>
            <person name="Liuni S."/>
            <person name="McWilliam S."/>
            <person name="Madan Babu M."/>
            <person name="Madera M."/>
            <person name="Marchionni L."/>
            <person name="Matsuda H."/>
            <person name="Matsuzawa S."/>
            <person name="Miki H."/>
            <person name="Mignone F."/>
            <person name="Miyake S."/>
            <person name="Morris K."/>
            <person name="Mottagui-Tabar S."/>
            <person name="Mulder N."/>
            <person name="Nakano N."/>
            <person name="Nakauchi H."/>
            <person name="Ng P."/>
            <person name="Nilsson R."/>
            <person name="Nishiguchi S."/>
            <person name="Nishikawa S."/>
            <person name="Nori F."/>
            <person name="Ohara O."/>
            <person name="Okazaki Y."/>
            <person name="Orlando V."/>
            <person name="Pang K.C."/>
            <person name="Pavan W.J."/>
            <person name="Pavesi G."/>
            <person name="Pesole G."/>
            <person name="Petrovsky N."/>
            <person name="Piazza S."/>
            <person name="Reed J."/>
            <person name="Reid J.F."/>
            <person name="Ring B.Z."/>
            <person name="Ringwald M."/>
            <person name="Rost B."/>
            <person name="Ruan Y."/>
            <person name="Salzberg S.L."/>
            <person name="Sandelin A."/>
            <person name="Schneider C."/>
            <person name="Schoenbach C."/>
            <person name="Sekiguchi K."/>
            <person name="Semple C.A."/>
            <person name="Seno S."/>
            <person name="Sessa L."/>
            <person name="Sheng Y."/>
            <person name="Shibata Y."/>
            <person name="Shimada H."/>
            <person name="Shimada K."/>
            <person name="Silva D."/>
            <person name="Sinclair B."/>
            <person name="Sperling S."/>
            <person name="Stupka E."/>
            <person name="Sugiura K."/>
            <person name="Sultana R."/>
            <person name="Takenaka Y."/>
            <person name="Taki K."/>
            <person name="Tammoja K."/>
            <person name="Tan S.L."/>
            <person name="Tang S."/>
            <person name="Taylor M.S."/>
            <person name="Tegner J."/>
            <person name="Teichmann S.A."/>
            <person name="Ueda H.R."/>
            <person name="van Nimwegen E."/>
            <person name="Verardo R."/>
            <person name="Wei C.L."/>
            <person name="Yagi K."/>
            <person name="Yamanishi H."/>
            <person name="Zabarovsky E."/>
            <person name="Zhu S."/>
            <person name="Zimmer A."/>
            <person name="Hide W."/>
            <person name="Bult C."/>
            <person name="Grimmond S.M."/>
            <person name="Teasdale R.D."/>
            <person name="Liu E.T."/>
            <person name="Brusic V."/>
            <person name="Quackenbush J."/>
            <person name="Wahlestedt C."/>
            <person name="Mattick J.S."/>
            <person name="Hume D.A."/>
            <person name="Kai C."/>
            <person name="Sasaki D."/>
            <person name="Tomaru Y."/>
            <person name="Fukuda S."/>
            <person name="Kanamori-Katayama M."/>
            <person name="Suzuki M."/>
            <person name="Aoki J."/>
            <person name="Arakawa T."/>
            <person name="Iida J."/>
            <person name="Imamura K."/>
            <person name="Itoh M."/>
            <person name="Kato T."/>
            <person name="Kawaji H."/>
            <person name="Kawagashira N."/>
            <person name="Kawashima T."/>
            <person name="Kojima M."/>
            <person name="Kondo S."/>
            <person name="Konno H."/>
            <person name="Nakano K."/>
            <person name="Ninomiya N."/>
            <person name="Nishio T."/>
            <person name="Okada M."/>
            <person name="Plessy C."/>
            <person name="Shibata K."/>
            <person name="Shiraki T."/>
            <person name="Suzuki S."/>
            <person name="Tagami M."/>
            <person name="Waki K."/>
            <person name="Watahiki A."/>
            <person name="Okamura-Oho Y."/>
            <person name="Suzuki H."/>
            <person name="Kawai J."/>
            <person name="Hayashizaki Y."/>
        </authorList>
    </citation>
    <scope>NUCLEOTIDE SEQUENCE [LARGE SCALE MRNA] OF 1-536 AND 1188-1358</scope>
    <source>
        <strain>C57BL/6J</strain>
        <tissue>Cerebellum</tissue>
        <tissue>Stomach</tissue>
        <tissue>Thymus</tissue>
    </source>
</reference>
<reference key="3">
    <citation type="journal article" date="2004" name="Genome Res.">
        <title>The status, quality, and expansion of the NIH full-length cDNA project: the Mammalian Gene Collection (MGC).</title>
        <authorList>
            <consortium name="The MGC Project Team"/>
        </authorList>
    </citation>
    <scope>NUCLEOTIDE SEQUENCE [LARGE SCALE MRNA] OF 1-638</scope>
    <source>
        <strain>Czech II</strain>
        <tissue>Eye</tissue>
        <tissue>Mammary gland</tissue>
    </source>
</reference>
<reference key="4">
    <citation type="journal article" date="2010" name="Cell">
        <title>A tissue-specific atlas of mouse protein phosphorylation and expression.</title>
        <authorList>
            <person name="Huttlin E.L."/>
            <person name="Jedrychowski M.P."/>
            <person name="Elias J.E."/>
            <person name="Goswami T."/>
            <person name="Rad R."/>
            <person name="Beausoleil S.A."/>
            <person name="Villen J."/>
            <person name="Haas W."/>
            <person name="Sowa M.E."/>
            <person name="Gygi S.P."/>
        </authorList>
    </citation>
    <scope>IDENTIFICATION BY MASS SPECTROMETRY [LARGE SCALE ANALYSIS]</scope>
    <source>
        <tissue>Brain</tissue>
        <tissue>Brown adipose tissue</tissue>
        <tissue>Heart</tissue>
        <tissue>Kidney</tissue>
        <tissue>Liver</tissue>
        <tissue>Lung</tissue>
        <tissue>Pancreas</tissue>
        <tissue>Spleen</tissue>
        <tissue>Testis</tissue>
    </source>
</reference>
<reference key="5">
    <citation type="journal article" date="2010" name="J. Cell Biol.">
        <title>The class IA phosphatidylinositol 3-kinase p110-beta subunit is a positive regulator of autophagy.</title>
        <authorList>
            <person name="Dou Z."/>
            <person name="Chattopadhyay M."/>
            <person name="Pan J.-A."/>
            <person name="Guerriero J.L."/>
            <person name="Jiang Y.-P."/>
            <person name="Ballou L.M."/>
            <person name="Yue Z."/>
            <person name="Lin R.Z."/>
            <person name="Zong W.-X."/>
        </authorList>
    </citation>
    <scope>IDENTIFICATION IN A COMPLEX WITH PIK3C3 AND PIK3CB</scope>
</reference>
<reference key="6">
    <citation type="journal article" date="2013" name="Cell">
        <title>Differential regulation of distinct Vps34 complexes by AMPK in nutrient stress and autophagy.</title>
        <authorList>
            <person name="Kim J."/>
            <person name="Kim Y.C."/>
            <person name="Fang C."/>
            <person name="Russell R.C."/>
            <person name="Kim J.H."/>
            <person name="Fan W."/>
            <person name="Liu R."/>
            <person name="Zhong Q."/>
            <person name="Guan K.L."/>
        </authorList>
    </citation>
    <scope>IDENTIFICATION IN A COMPLEX WITH PIK3C3; BECN1; UVRAG AND ATG14</scope>
</reference>
<reference key="7">
    <citation type="journal article" date="2013" name="Nature">
        <title>Functional interaction between autophagy and ciliogenesis.</title>
        <authorList>
            <person name="Pampliega O."/>
            <person name="Orhon I."/>
            <person name="Patel B."/>
            <person name="Sridhar S."/>
            <person name="Diaz-Carretero A."/>
            <person name="Beau I."/>
            <person name="Codogno P."/>
            <person name="Satir B.H."/>
            <person name="Satir P."/>
            <person name="Cuervo A.M."/>
        </authorList>
    </citation>
    <scope>SUBCELLULAR LOCATION</scope>
</reference>
<reference key="8">
    <citation type="journal article" date="2021" name="Dev. Cell">
        <title>Autophagic elimination of ribosomes during spermiogenesis provides energy for flagellar motility.</title>
        <authorList>
            <person name="Lei Y."/>
            <person name="Zhang X."/>
            <person name="Xu Q."/>
            <person name="Liu S."/>
            <person name="Li C."/>
            <person name="Jiang H."/>
            <person name="Lin H."/>
            <person name="Kong E."/>
            <person name="Liu J."/>
            <person name="Qi S."/>
            <person name="Li H."/>
            <person name="Xu W."/>
            <person name="Lu K."/>
        </authorList>
    </citation>
    <scope>INTERACTION WITH ARMC3</scope>
</reference>
<accession>Q8VD65</accession>
<accession>Q56A65</accession>
<accession>Q8C948</accession>
<accession>Q8C9D7</accession>
<accession>Q9CVC5</accession>